<sequence>MNAVTDLKQDYLVADINLAGWGRKEIAIAETEMPGLMAIRDEFAAAQPLKGARIAGSLHMTIQTAVLIETLKALGADVRWASCNIFSTQDHAAAAIAAGGTPVFAFKGESLKEYWDFTHRIFDWADGGTPNMILDDGGDATLLLHLGARAEKDQSVIAKATSEEETYLFAAIKEKLAKDPSWYSRNLAAIRGVTEETTTGVHRLYQMAQKGELRFPAINVNDSVTKSKFDNLYGCRESLVDGIKRATDVMIAGKVAIVAGYGDVGKGSAQALRALSAQVWVTEIDPICALQAAMEGYRVVTMDYAAEHGDIFVTCTGNYHVITHDHMAKMKDQAIVCNIGHFDNEIDIASIEKYEWDEIKPQVDHVKFPDGKKLIILAKGRLVNLGCATGHPSYVMSSSFANQTIAQIELWQERDSGKYPVGVYTLPKHLDEKVARLQLRKLNAQLTELTEQQAAYIGVKKEGPYKADHYRY</sequence>
<comment type="function">
    <text evidence="1">May play a key role in the regulation of the intracellular concentration of adenosylhomocysteine.</text>
</comment>
<comment type="catalytic activity">
    <reaction evidence="1">
        <text>S-adenosyl-L-homocysteine + H2O = L-homocysteine + adenosine</text>
        <dbReference type="Rhea" id="RHEA:21708"/>
        <dbReference type="ChEBI" id="CHEBI:15377"/>
        <dbReference type="ChEBI" id="CHEBI:16335"/>
        <dbReference type="ChEBI" id="CHEBI:57856"/>
        <dbReference type="ChEBI" id="CHEBI:58199"/>
        <dbReference type="EC" id="3.13.2.1"/>
    </reaction>
</comment>
<comment type="cofactor">
    <cofactor evidence="1">
        <name>NAD(+)</name>
        <dbReference type="ChEBI" id="CHEBI:57540"/>
    </cofactor>
    <text evidence="1">Binds 1 NAD(+) per subunit.</text>
</comment>
<comment type="pathway">
    <text evidence="1">Amino-acid biosynthesis; L-homocysteine biosynthesis; L-homocysteine from S-adenosyl-L-homocysteine: step 1/1.</text>
</comment>
<comment type="subcellular location">
    <subcellularLocation>
        <location evidence="1">Cytoplasm</location>
    </subcellularLocation>
</comment>
<comment type="similarity">
    <text evidence="1">Belongs to the adenosylhomocysteinase family.</text>
</comment>
<reference key="1">
    <citation type="journal article" date="2006" name="Nat. Biotechnol.">
        <title>Genome sequence of the bioplastic-producing 'Knallgas' bacterium Ralstonia eutropha H16.</title>
        <authorList>
            <person name="Pohlmann A."/>
            <person name="Fricke W.F."/>
            <person name="Reinecke F."/>
            <person name="Kusian B."/>
            <person name="Liesegang H."/>
            <person name="Cramm R."/>
            <person name="Eitinger T."/>
            <person name="Ewering C."/>
            <person name="Poetter M."/>
            <person name="Schwartz E."/>
            <person name="Strittmatter A."/>
            <person name="Voss I."/>
            <person name="Gottschalk G."/>
            <person name="Steinbuechel A."/>
            <person name="Friedrich B."/>
            <person name="Bowien B."/>
        </authorList>
    </citation>
    <scope>NUCLEOTIDE SEQUENCE [LARGE SCALE GENOMIC DNA]</scope>
    <source>
        <strain>ATCC 17699 / DSM 428 / KCTC 22496 / NCIMB 10442 / H16 / Stanier 337</strain>
    </source>
</reference>
<feature type="chain" id="PRO_1000129297" description="Adenosylhomocysteinase">
    <location>
        <begin position="1"/>
        <end position="472"/>
    </location>
</feature>
<feature type="binding site" evidence="1">
    <location>
        <position position="61"/>
    </location>
    <ligand>
        <name>substrate</name>
    </ligand>
</feature>
<feature type="binding site" evidence="1">
    <location>
        <position position="136"/>
    </location>
    <ligand>
        <name>substrate</name>
    </ligand>
</feature>
<feature type="binding site" evidence="1">
    <location>
        <position position="196"/>
    </location>
    <ligand>
        <name>substrate</name>
    </ligand>
</feature>
<feature type="binding site" evidence="1">
    <location>
        <begin position="197"/>
        <end position="199"/>
    </location>
    <ligand>
        <name>NAD(+)</name>
        <dbReference type="ChEBI" id="CHEBI:57540"/>
    </ligand>
</feature>
<feature type="binding site" evidence="1">
    <location>
        <position position="226"/>
    </location>
    <ligand>
        <name>substrate</name>
    </ligand>
</feature>
<feature type="binding site" evidence="1">
    <location>
        <position position="230"/>
    </location>
    <ligand>
        <name>substrate</name>
    </ligand>
</feature>
<feature type="binding site" evidence="1">
    <location>
        <position position="231"/>
    </location>
    <ligand>
        <name>NAD(+)</name>
        <dbReference type="ChEBI" id="CHEBI:57540"/>
    </ligand>
</feature>
<feature type="binding site" evidence="1">
    <location>
        <begin position="260"/>
        <end position="265"/>
    </location>
    <ligand>
        <name>NAD(+)</name>
        <dbReference type="ChEBI" id="CHEBI:57540"/>
    </ligand>
</feature>
<feature type="binding site" evidence="1">
    <location>
        <position position="283"/>
    </location>
    <ligand>
        <name>NAD(+)</name>
        <dbReference type="ChEBI" id="CHEBI:57540"/>
    </ligand>
</feature>
<feature type="binding site" evidence="1">
    <location>
        <position position="318"/>
    </location>
    <ligand>
        <name>NAD(+)</name>
        <dbReference type="ChEBI" id="CHEBI:57540"/>
    </ligand>
</feature>
<feature type="binding site" evidence="1">
    <location>
        <begin position="339"/>
        <end position="341"/>
    </location>
    <ligand>
        <name>NAD(+)</name>
        <dbReference type="ChEBI" id="CHEBI:57540"/>
    </ligand>
</feature>
<feature type="binding site" evidence="1">
    <location>
        <position position="384"/>
    </location>
    <ligand>
        <name>NAD(+)</name>
        <dbReference type="ChEBI" id="CHEBI:57540"/>
    </ligand>
</feature>
<keyword id="KW-0963">Cytoplasm</keyword>
<keyword id="KW-0378">Hydrolase</keyword>
<keyword id="KW-0520">NAD</keyword>
<keyword id="KW-0554">One-carbon metabolism</keyword>
<keyword id="KW-1185">Reference proteome</keyword>
<gene>
    <name evidence="1" type="primary">ahcY</name>
    <name type="ordered locus">H16_A0244</name>
</gene>
<protein>
    <recommendedName>
        <fullName evidence="1">Adenosylhomocysteinase</fullName>
        <ecNumber evidence="1">3.13.2.1</ecNumber>
    </recommendedName>
    <alternativeName>
        <fullName evidence="1">S-adenosyl-L-homocysteine hydrolase</fullName>
        <shortName evidence="1">AdoHcyase</shortName>
    </alternativeName>
</protein>
<name>SAHH_CUPNH</name>
<proteinExistence type="inferred from homology"/>
<dbReference type="EC" id="3.13.2.1" evidence="1"/>
<dbReference type="EMBL" id="AM260479">
    <property type="protein sequence ID" value="CAJ91396.1"/>
    <property type="molecule type" value="Genomic_DNA"/>
</dbReference>
<dbReference type="RefSeq" id="WP_011614423.1">
    <property type="nucleotide sequence ID" value="NC_008313.1"/>
</dbReference>
<dbReference type="SMR" id="Q0KF25"/>
<dbReference type="STRING" id="381666.H16_A0244"/>
<dbReference type="KEGG" id="reh:H16_A0244"/>
<dbReference type="PATRIC" id="fig|381666.6.peg.604"/>
<dbReference type="eggNOG" id="COG0499">
    <property type="taxonomic scope" value="Bacteria"/>
</dbReference>
<dbReference type="HOGENOM" id="CLU_025194_2_1_4"/>
<dbReference type="OrthoDB" id="9802717at2"/>
<dbReference type="UniPathway" id="UPA00314">
    <property type="reaction ID" value="UER00076"/>
</dbReference>
<dbReference type="Proteomes" id="UP000008210">
    <property type="component" value="Chromosome 1"/>
</dbReference>
<dbReference type="GO" id="GO:0005829">
    <property type="term" value="C:cytosol"/>
    <property type="evidence" value="ECO:0007669"/>
    <property type="project" value="TreeGrafter"/>
</dbReference>
<dbReference type="GO" id="GO:0004013">
    <property type="term" value="F:adenosylhomocysteinase activity"/>
    <property type="evidence" value="ECO:0007669"/>
    <property type="project" value="UniProtKB-UniRule"/>
</dbReference>
<dbReference type="GO" id="GO:0071269">
    <property type="term" value="P:L-homocysteine biosynthetic process"/>
    <property type="evidence" value="ECO:0007669"/>
    <property type="project" value="UniProtKB-UniRule"/>
</dbReference>
<dbReference type="GO" id="GO:0006730">
    <property type="term" value="P:one-carbon metabolic process"/>
    <property type="evidence" value="ECO:0007669"/>
    <property type="project" value="UniProtKB-KW"/>
</dbReference>
<dbReference type="GO" id="GO:0033353">
    <property type="term" value="P:S-adenosylmethionine cycle"/>
    <property type="evidence" value="ECO:0007669"/>
    <property type="project" value="TreeGrafter"/>
</dbReference>
<dbReference type="CDD" id="cd00401">
    <property type="entry name" value="SAHH"/>
    <property type="match status" value="1"/>
</dbReference>
<dbReference type="FunFam" id="3.40.50.720:FF:000004">
    <property type="entry name" value="Adenosylhomocysteinase"/>
    <property type="match status" value="1"/>
</dbReference>
<dbReference type="Gene3D" id="3.40.50.1480">
    <property type="entry name" value="Adenosylhomocysteinase-like"/>
    <property type="match status" value="1"/>
</dbReference>
<dbReference type="Gene3D" id="3.40.50.720">
    <property type="entry name" value="NAD(P)-binding Rossmann-like Domain"/>
    <property type="match status" value="1"/>
</dbReference>
<dbReference type="HAMAP" id="MF_00563">
    <property type="entry name" value="AdoHcyase"/>
    <property type="match status" value="1"/>
</dbReference>
<dbReference type="InterPro" id="IPR042172">
    <property type="entry name" value="Adenosylhomocyst_ase-like_sf"/>
</dbReference>
<dbReference type="InterPro" id="IPR000043">
    <property type="entry name" value="Adenosylhomocysteinase-like"/>
</dbReference>
<dbReference type="InterPro" id="IPR015878">
    <property type="entry name" value="Ado_hCys_hydrolase_NAD-bd"/>
</dbReference>
<dbReference type="InterPro" id="IPR036291">
    <property type="entry name" value="NAD(P)-bd_dom_sf"/>
</dbReference>
<dbReference type="InterPro" id="IPR020082">
    <property type="entry name" value="S-Ado-L-homoCys_hydrolase_CS"/>
</dbReference>
<dbReference type="NCBIfam" id="TIGR00936">
    <property type="entry name" value="ahcY"/>
    <property type="match status" value="1"/>
</dbReference>
<dbReference type="NCBIfam" id="NF004005">
    <property type="entry name" value="PRK05476.2-3"/>
    <property type="match status" value="1"/>
</dbReference>
<dbReference type="PANTHER" id="PTHR23420">
    <property type="entry name" value="ADENOSYLHOMOCYSTEINASE"/>
    <property type="match status" value="1"/>
</dbReference>
<dbReference type="PANTHER" id="PTHR23420:SF0">
    <property type="entry name" value="ADENOSYLHOMOCYSTEINASE"/>
    <property type="match status" value="1"/>
</dbReference>
<dbReference type="Pfam" id="PF05221">
    <property type="entry name" value="AdoHcyase"/>
    <property type="match status" value="1"/>
</dbReference>
<dbReference type="Pfam" id="PF00670">
    <property type="entry name" value="AdoHcyase_NAD"/>
    <property type="match status" value="1"/>
</dbReference>
<dbReference type="PIRSF" id="PIRSF001109">
    <property type="entry name" value="Ad_hcy_hydrolase"/>
    <property type="match status" value="1"/>
</dbReference>
<dbReference type="SMART" id="SM00996">
    <property type="entry name" value="AdoHcyase"/>
    <property type="match status" value="1"/>
</dbReference>
<dbReference type="SMART" id="SM00997">
    <property type="entry name" value="AdoHcyase_NAD"/>
    <property type="match status" value="1"/>
</dbReference>
<dbReference type="SUPFAM" id="SSF52283">
    <property type="entry name" value="Formate/glycerate dehydrogenase catalytic domain-like"/>
    <property type="match status" value="1"/>
</dbReference>
<dbReference type="SUPFAM" id="SSF51735">
    <property type="entry name" value="NAD(P)-binding Rossmann-fold domains"/>
    <property type="match status" value="1"/>
</dbReference>
<dbReference type="PROSITE" id="PS00738">
    <property type="entry name" value="ADOHCYASE_1"/>
    <property type="match status" value="1"/>
</dbReference>
<dbReference type="PROSITE" id="PS00739">
    <property type="entry name" value="ADOHCYASE_2"/>
    <property type="match status" value="1"/>
</dbReference>
<accession>Q0KF25</accession>
<organism>
    <name type="scientific">Cupriavidus necator (strain ATCC 17699 / DSM 428 / KCTC 22496 / NCIMB 10442 / H16 / Stanier 337)</name>
    <name type="common">Ralstonia eutropha</name>
    <dbReference type="NCBI Taxonomy" id="381666"/>
    <lineage>
        <taxon>Bacteria</taxon>
        <taxon>Pseudomonadati</taxon>
        <taxon>Pseudomonadota</taxon>
        <taxon>Betaproteobacteria</taxon>
        <taxon>Burkholderiales</taxon>
        <taxon>Burkholderiaceae</taxon>
        <taxon>Cupriavidus</taxon>
    </lineage>
</organism>
<evidence type="ECO:0000255" key="1">
    <source>
        <dbReference type="HAMAP-Rule" id="MF_00563"/>
    </source>
</evidence>